<gene>
    <name evidence="10" type="primary">BBX22</name>
    <name evidence="8" type="synonym">DBB3</name>
    <name evidence="9" type="synonym">LZF1</name>
    <name type="synonym">STH3</name>
    <name type="ordered locus">At1g78600</name>
    <name type="ORF">T30F21.7</name>
</gene>
<organism>
    <name type="scientific">Arabidopsis thaliana</name>
    <name type="common">Mouse-ear cress</name>
    <dbReference type="NCBI Taxonomy" id="3702"/>
    <lineage>
        <taxon>Eukaryota</taxon>
        <taxon>Viridiplantae</taxon>
        <taxon>Streptophyta</taxon>
        <taxon>Embryophyta</taxon>
        <taxon>Tracheophyta</taxon>
        <taxon>Spermatophyta</taxon>
        <taxon>Magnoliopsida</taxon>
        <taxon>eudicotyledons</taxon>
        <taxon>Gunneridae</taxon>
        <taxon>Pentapetalae</taxon>
        <taxon>rosids</taxon>
        <taxon>malvids</taxon>
        <taxon>Brassicales</taxon>
        <taxon>Brassicaceae</taxon>
        <taxon>Camelineae</taxon>
        <taxon>Arabidopsis</taxon>
    </lineage>
</organism>
<evidence type="ECO:0000255" key="1">
    <source>
        <dbReference type="PROSITE-ProRule" id="PRU00024"/>
    </source>
</evidence>
<evidence type="ECO:0000256" key="2">
    <source>
        <dbReference type="SAM" id="MobiDB-lite"/>
    </source>
</evidence>
<evidence type="ECO:0000269" key="3">
    <source>
    </source>
</evidence>
<evidence type="ECO:0000269" key="4">
    <source>
    </source>
</evidence>
<evidence type="ECO:0000269" key="5">
    <source>
    </source>
</evidence>
<evidence type="ECO:0000269" key="6">
    <source>
    </source>
</evidence>
<evidence type="ECO:0000269" key="7">
    <source>
    </source>
</evidence>
<evidence type="ECO:0000303" key="8">
    <source>
    </source>
</evidence>
<evidence type="ECO:0000303" key="9">
    <source>
    </source>
</evidence>
<evidence type="ECO:0000303" key="10">
    <source>
    </source>
</evidence>
<evidence type="ECO:0000305" key="11"/>
<accession>Q9SYM2</accession>
<accession>Q8RWG4</accession>
<comment type="function">
    <text evidence="3 4 5 6 7">Acts as a positive regulator of seedling photomorphogenesis and light-regulated inhibition of hypocotyl elongation, independently and in concert with HY5 and BBX21 (PubMed:18182030, PubMed:18540109, PubMed:18796637, PubMed:21427283). Acts as a positive regulator of de-etiolation and influences chloroplast biogenesis and function through regulation of genes encoding chloroplast proteins (PubMed:18182030). Acts downstream of COP1 and plays an important role in early and long-term adjustment of the shade avoidance syndrome (SAS) responses in natural environments (PubMed:21070414). Regulates the expression of genes responsive to light hormone signals which may contribute to optimal seedling development (PubMed:21427283).</text>
</comment>
<comment type="subunit">
    <text evidence="5">Interacts with HY5.</text>
</comment>
<comment type="interaction">
    <interactant intactId="EBI-1994217">
        <id>Q9SYM2</id>
    </interactant>
    <interactant intactId="EBI-301660">
        <id>O24646</id>
        <label>HY5</label>
    </interactant>
    <organismsDiffer>false</organismsDiffer>
    <experiments>3</experiments>
</comment>
<comment type="subcellular location">
    <subcellularLocation>
        <location evidence="5">Nucleus</location>
    </subcellularLocation>
</comment>
<comment type="alternative products">
    <event type="alternative splicing"/>
    <isoform>
        <id>Q9SYM2-1</id>
        <name>1</name>
        <sequence type="displayed"/>
    </isoform>
    <text>A number of isoforms are produced. According to EST sequences.</text>
</comment>
<comment type="induction">
    <text evidence="3">By light.</text>
</comment>
<comment type="PTM">
    <text evidence="5 7">Ubiquitinated by COP1 in vitro (PubMed:18796637). COP1-mediated degradation of BBX22 by the proteasome occurs in the dark and is important for a precise skotomorphogenesis process and optimization of seedling growth under short days conditions (PubMed:21427283).</text>
</comment>
<comment type="disruption phenotype">
    <text evidence="3">Increased hypocotyl length under short day conditions (PubMed:18796637). Delayed chloroplast development (PubMed:18182030).</text>
</comment>
<comment type="sequence caution" evidence="11">
    <conflict type="erroneous gene model prediction">
        <sequence resource="EMBL-CDS" id="AAD30576"/>
    </conflict>
</comment>
<proteinExistence type="evidence at protein level"/>
<protein>
    <recommendedName>
        <fullName evidence="10">B-box zinc finger protein 22</fullName>
    </recommendedName>
    <alternativeName>
        <fullName evidence="8">Protein DOUBLE B-BOX 3</fullName>
    </alternativeName>
    <alternativeName>
        <fullName evidence="9">Protein LIGHT-REGULATED ZINC FINGER PROTEIN 1</fullName>
    </alternativeName>
    <alternativeName>
        <fullName>Protein SALT TOLERANCE HOMOLOG 3</fullName>
    </alternativeName>
</protein>
<dbReference type="EMBL" id="AC007260">
    <property type="protein sequence ID" value="AAD30576.1"/>
    <property type="status" value="ALT_SEQ"/>
    <property type="molecule type" value="Genomic_DNA"/>
</dbReference>
<dbReference type="EMBL" id="CP002684">
    <property type="protein sequence ID" value="AEE36125.1"/>
    <property type="molecule type" value="Genomic_DNA"/>
</dbReference>
<dbReference type="EMBL" id="AY093108">
    <property type="protein sequence ID" value="AAM13107.1"/>
    <property type="molecule type" value="mRNA"/>
</dbReference>
<dbReference type="EMBL" id="BT006324">
    <property type="protein sequence ID" value="AAP13432.1"/>
    <property type="molecule type" value="mRNA"/>
</dbReference>
<dbReference type="EMBL" id="AY087387">
    <property type="protein sequence ID" value="AAM64937.1"/>
    <property type="molecule type" value="mRNA"/>
</dbReference>
<dbReference type="PIR" id="F96814">
    <property type="entry name" value="F96814"/>
</dbReference>
<dbReference type="RefSeq" id="NP_565183.1">
    <molecule id="Q9SYM2-1"/>
    <property type="nucleotide sequence ID" value="NM_106507.4"/>
</dbReference>
<dbReference type="SMR" id="Q9SYM2"/>
<dbReference type="FunCoup" id="Q9SYM2">
    <property type="interactions" value="120"/>
</dbReference>
<dbReference type="IntAct" id="Q9SYM2">
    <property type="interactions" value="5"/>
</dbReference>
<dbReference type="STRING" id="3702.Q9SYM2"/>
<dbReference type="EnsemblPlants" id="AT1G78600.1">
    <molecule id="Q9SYM2-1"/>
    <property type="protein sequence ID" value="AT1G78600.1"/>
    <property type="gene ID" value="AT1G78600"/>
</dbReference>
<dbReference type="GeneID" id="844196"/>
<dbReference type="Gramene" id="AT1G78600.1">
    <molecule id="Q9SYM2-1"/>
    <property type="protein sequence ID" value="AT1G78600.1"/>
    <property type="gene ID" value="AT1G78600"/>
</dbReference>
<dbReference type="KEGG" id="ath:AT1G78600"/>
<dbReference type="Araport" id="AT1G78600"/>
<dbReference type="TAIR" id="AT1G78600">
    <property type="gene designation" value="LZF1"/>
</dbReference>
<dbReference type="eggNOG" id="ENOG502QT4C">
    <property type="taxonomic scope" value="Eukaryota"/>
</dbReference>
<dbReference type="InParanoid" id="Q9SYM2"/>
<dbReference type="OMA" id="PEISWMV"/>
<dbReference type="OrthoDB" id="153872at2759"/>
<dbReference type="PhylomeDB" id="Q9SYM2"/>
<dbReference type="PRO" id="PR:Q9SYM2"/>
<dbReference type="Proteomes" id="UP000006548">
    <property type="component" value="Chromosome 1"/>
</dbReference>
<dbReference type="ExpressionAtlas" id="Q9SYM2">
    <property type="expression patterns" value="baseline and differential"/>
</dbReference>
<dbReference type="GO" id="GO:0005634">
    <property type="term" value="C:nucleus"/>
    <property type="evidence" value="ECO:0007669"/>
    <property type="project" value="UniProtKB-SubCell"/>
</dbReference>
<dbReference type="GO" id="GO:0008270">
    <property type="term" value="F:zinc ion binding"/>
    <property type="evidence" value="ECO:0007669"/>
    <property type="project" value="UniProtKB-KW"/>
</dbReference>
<dbReference type="CDD" id="cd19821">
    <property type="entry name" value="Bbox1_BBX-like"/>
    <property type="match status" value="2"/>
</dbReference>
<dbReference type="FunFam" id="3.30.160.60:FF:000589">
    <property type="entry name" value="B-box zinc finger protein 22"/>
    <property type="match status" value="1"/>
</dbReference>
<dbReference type="Gene3D" id="3.30.160.60">
    <property type="entry name" value="Classic Zinc Finger"/>
    <property type="match status" value="1"/>
</dbReference>
<dbReference type="InterPro" id="IPR051979">
    <property type="entry name" value="B-box_zinc_finger"/>
</dbReference>
<dbReference type="InterPro" id="IPR049808">
    <property type="entry name" value="CONSTANS-like_Bbox1"/>
</dbReference>
<dbReference type="InterPro" id="IPR000315">
    <property type="entry name" value="Znf_B-box"/>
</dbReference>
<dbReference type="PANTHER" id="PTHR31832">
    <property type="entry name" value="B-BOX ZINC FINGER PROTEIN 22"/>
    <property type="match status" value="1"/>
</dbReference>
<dbReference type="PANTHER" id="PTHR31832:SF68">
    <property type="entry name" value="B-BOX ZINC FINGER PROTEIN 22"/>
    <property type="match status" value="1"/>
</dbReference>
<dbReference type="Pfam" id="PF00643">
    <property type="entry name" value="zf-B_box"/>
    <property type="match status" value="2"/>
</dbReference>
<dbReference type="SMART" id="SM00336">
    <property type="entry name" value="BBOX"/>
    <property type="match status" value="2"/>
</dbReference>
<dbReference type="PROSITE" id="PS50119">
    <property type="entry name" value="ZF_BBOX"/>
    <property type="match status" value="2"/>
</dbReference>
<feature type="chain" id="PRO_0000113298" description="B-box zinc finger protein 22">
    <location>
        <begin position="1"/>
        <end position="299"/>
    </location>
</feature>
<feature type="zinc finger region" description="B box-type 1; atypical" evidence="1">
    <location>
        <begin position="5"/>
        <end position="47"/>
    </location>
</feature>
<feature type="zinc finger region" description="B box-type 2; atypical" evidence="1">
    <location>
        <begin position="57"/>
        <end position="99"/>
    </location>
</feature>
<feature type="region of interest" description="Disordered" evidence="2">
    <location>
        <begin position="143"/>
        <end position="181"/>
    </location>
</feature>
<feature type="region of interest" description="Disordered" evidence="2">
    <location>
        <begin position="206"/>
        <end position="299"/>
    </location>
</feature>
<feature type="compositionally biased region" description="Polar residues" evidence="2">
    <location>
        <begin position="164"/>
        <end position="181"/>
    </location>
</feature>
<feature type="compositionally biased region" description="Polar residues" evidence="2">
    <location>
        <begin position="251"/>
        <end position="260"/>
    </location>
</feature>
<feature type="compositionally biased region" description="Polar residues" evidence="2">
    <location>
        <begin position="277"/>
        <end position="290"/>
    </location>
</feature>
<feature type="binding site" evidence="1">
    <location>
        <position position="5"/>
    </location>
    <ligand>
        <name>Zn(2+)</name>
        <dbReference type="ChEBI" id="CHEBI:29105"/>
        <label>1</label>
    </ligand>
</feature>
<feature type="binding site" evidence="1">
    <location>
        <position position="8"/>
    </location>
    <ligand>
        <name>Zn(2+)</name>
        <dbReference type="ChEBI" id="CHEBI:29105"/>
        <label>1</label>
    </ligand>
</feature>
<feature type="binding site" evidence="1">
    <location>
        <position position="28"/>
    </location>
    <ligand>
        <name>Zn(2+)</name>
        <dbReference type="ChEBI" id="CHEBI:29105"/>
        <label>1</label>
    </ligand>
</feature>
<feature type="binding site" evidence="1">
    <location>
        <position position="33"/>
    </location>
    <ligand>
        <name>Zn(2+)</name>
        <dbReference type="ChEBI" id="CHEBI:29105"/>
        <label>1</label>
    </ligand>
</feature>
<feature type="binding site" evidence="1">
    <location>
        <position position="57"/>
    </location>
    <ligand>
        <name>Zn(2+)</name>
        <dbReference type="ChEBI" id="CHEBI:29105"/>
        <label>2</label>
    </ligand>
</feature>
<feature type="binding site" evidence="1">
    <location>
        <position position="60"/>
    </location>
    <ligand>
        <name>Zn(2+)</name>
        <dbReference type="ChEBI" id="CHEBI:29105"/>
        <label>2</label>
    </ligand>
</feature>
<feature type="binding site" evidence="1">
    <location>
        <position position="80"/>
    </location>
    <ligand>
        <name>Zn(2+)</name>
        <dbReference type="ChEBI" id="CHEBI:29105"/>
        <label>2</label>
    </ligand>
</feature>
<feature type="binding site" evidence="1">
    <location>
        <position position="85"/>
    </location>
    <ligand>
        <name>Zn(2+)</name>
        <dbReference type="ChEBI" id="CHEBI:29105"/>
        <label>2</label>
    </ligand>
</feature>
<feature type="mutagenesis site" description="No effect on the interaction with HY5.">
    <original>D</original>
    <variation>A</variation>
    <location>
        <position position="20"/>
    </location>
</feature>
<feature type="mutagenesis site" description="Abolishes interaction with HY5." evidence="5">
    <original>D</original>
    <variation>A</variation>
    <location>
        <position position="72"/>
    </location>
</feature>
<feature type="mutagenesis site" description="Abolishes interaction with HY5." evidence="5">
    <original>D</original>
    <variation>A</variation>
    <location>
        <position position="81"/>
    </location>
</feature>
<name>BBX22_ARATH</name>
<reference key="1">
    <citation type="journal article" date="2000" name="Nature">
        <title>Sequence and analysis of chromosome 1 of the plant Arabidopsis thaliana.</title>
        <authorList>
            <person name="Theologis A."/>
            <person name="Ecker J.R."/>
            <person name="Palm C.J."/>
            <person name="Federspiel N.A."/>
            <person name="Kaul S."/>
            <person name="White O."/>
            <person name="Alonso J."/>
            <person name="Altafi H."/>
            <person name="Araujo R."/>
            <person name="Bowman C.L."/>
            <person name="Brooks S.Y."/>
            <person name="Buehler E."/>
            <person name="Chan A."/>
            <person name="Chao Q."/>
            <person name="Chen H."/>
            <person name="Cheuk R.F."/>
            <person name="Chin C.W."/>
            <person name="Chung M.K."/>
            <person name="Conn L."/>
            <person name="Conway A.B."/>
            <person name="Conway A.R."/>
            <person name="Creasy T.H."/>
            <person name="Dewar K."/>
            <person name="Dunn P."/>
            <person name="Etgu P."/>
            <person name="Feldblyum T.V."/>
            <person name="Feng J.-D."/>
            <person name="Fong B."/>
            <person name="Fujii C.Y."/>
            <person name="Gill J.E."/>
            <person name="Goldsmith A.D."/>
            <person name="Haas B."/>
            <person name="Hansen N.F."/>
            <person name="Hughes B."/>
            <person name="Huizar L."/>
            <person name="Hunter J.L."/>
            <person name="Jenkins J."/>
            <person name="Johnson-Hopson C."/>
            <person name="Khan S."/>
            <person name="Khaykin E."/>
            <person name="Kim C.J."/>
            <person name="Koo H.L."/>
            <person name="Kremenetskaia I."/>
            <person name="Kurtz D.B."/>
            <person name="Kwan A."/>
            <person name="Lam B."/>
            <person name="Langin-Hooper S."/>
            <person name="Lee A."/>
            <person name="Lee J.M."/>
            <person name="Lenz C.A."/>
            <person name="Li J.H."/>
            <person name="Li Y.-P."/>
            <person name="Lin X."/>
            <person name="Liu S.X."/>
            <person name="Liu Z.A."/>
            <person name="Luros J.S."/>
            <person name="Maiti R."/>
            <person name="Marziali A."/>
            <person name="Militscher J."/>
            <person name="Miranda M."/>
            <person name="Nguyen M."/>
            <person name="Nierman W.C."/>
            <person name="Osborne B.I."/>
            <person name="Pai G."/>
            <person name="Peterson J."/>
            <person name="Pham P.K."/>
            <person name="Rizzo M."/>
            <person name="Rooney T."/>
            <person name="Rowley D."/>
            <person name="Sakano H."/>
            <person name="Salzberg S.L."/>
            <person name="Schwartz J.R."/>
            <person name="Shinn P."/>
            <person name="Southwick A.M."/>
            <person name="Sun H."/>
            <person name="Tallon L.J."/>
            <person name="Tambunga G."/>
            <person name="Toriumi M.J."/>
            <person name="Town C.D."/>
            <person name="Utterback T."/>
            <person name="Van Aken S."/>
            <person name="Vaysberg M."/>
            <person name="Vysotskaia V.S."/>
            <person name="Walker M."/>
            <person name="Wu D."/>
            <person name="Yu G."/>
            <person name="Fraser C.M."/>
            <person name="Venter J.C."/>
            <person name="Davis R.W."/>
        </authorList>
    </citation>
    <scope>NUCLEOTIDE SEQUENCE [LARGE SCALE GENOMIC DNA]</scope>
    <source>
        <strain>cv. Columbia</strain>
    </source>
</reference>
<reference key="2">
    <citation type="journal article" date="2017" name="Plant J.">
        <title>Araport11: a complete reannotation of the Arabidopsis thaliana reference genome.</title>
        <authorList>
            <person name="Cheng C.Y."/>
            <person name="Krishnakumar V."/>
            <person name="Chan A.P."/>
            <person name="Thibaud-Nissen F."/>
            <person name="Schobel S."/>
            <person name="Town C.D."/>
        </authorList>
    </citation>
    <scope>GENOME REANNOTATION</scope>
    <source>
        <strain>cv. Columbia</strain>
    </source>
</reference>
<reference key="3">
    <citation type="journal article" date="2003" name="Science">
        <title>Empirical analysis of transcriptional activity in the Arabidopsis genome.</title>
        <authorList>
            <person name="Yamada K."/>
            <person name="Lim J."/>
            <person name="Dale J.M."/>
            <person name="Chen H."/>
            <person name="Shinn P."/>
            <person name="Palm C.J."/>
            <person name="Southwick A.M."/>
            <person name="Wu H.C."/>
            <person name="Kim C.J."/>
            <person name="Nguyen M."/>
            <person name="Pham P.K."/>
            <person name="Cheuk R.F."/>
            <person name="Karlin-Newmann G."/>
            <person name="Liu S.X."/>
            <person name="Lam B."/>
            <person name="Sakano H."/>
            <person name="Wu T."/>
            <person name="Yu G."/>
            <person name="Miranda M."/>
            <person name="Quach H.L."/>
            <person name="Tripp M."/>
            <person name="Chang C.H."/>
            <person name="Lee J.M."/>
            <person name="Toriumi M.J."/>
            <person name="Chan M.M."/>
            <person name="Tang C.C."/>
            <person name="Onodera C.S."/>
            <person name="Deng J.M."/>
            <person name="Akiyama K."/>
            <person name="Ansari Y."/>
            <person name="Arakawa T."/>
            <person name="Banh J."/>
            <person name="Banno F."/>
            <person name="Bowser L."/>
            <person name="Brooks S.Y."/>
            <person name="Carninci P."/>
            <person name="Chao Q."/>
            <person name="Choy N."/>
            <person name="Enju A."/>
            <person name="Goldsmith A.D."/>
            <person name="Gurjal M."/>
            <person name="Hansen N.F."/>
            <person name="Hayashizaki Y."/>
            <person name="Johnson-Hopson C."/>
            <person name="Hsuan V.W."/>
            <person name="Iida K."/>
            <person name="Karnes M."/>
            <person name="Khan S."/>
            <person name="Koesema E."/>
            <person name="Ishida J."/>
            <person name="Jiang P.X."/>
            <person name="Jones T."/>
            <person name="Kawai J."/>
            <person name="Kamiya A."/>
            <person name="Meyers C."/>
            <person name="Nakajima M."/>
            <person name="Narusaka M."/>
            <person name="Seki M."/>
            <person name="Sakurai T."/>
            <person name="Satou M."/>
            <person name="Tamse R."/>
            <person name="Vaysberg M."/>
            <person name="Wallender E.K."/>
            <person name="Wong C."/>
            <person name="Yamamura Y."/>
            <person name="Yuan S."/>
            <person name="Shinozaki K."/>
            <person name="Davis R.W."/>
            <person name="Theologis A."/>
            <person name="Ecker J.R."/>
        </authorList>
    </citation>
    <scope>NUCLEOTIDE SEQUENCE [LARGE SCALE MRNA]</scope>
    <source>
        <strain>cv. Columbia</strain>
    </source>
</reference>
<reference key="4">
    <citation type="submission" date="2002-03" db="EMBL/GenBank/DDBJ databases">
        <title>Full-length cDNA from Arabidopsis thaliana.</title>
        <authorList>
            <person name="Brover V.V."/>
            <person name="Troukhan M.E."/>
            <person name="Alexandrov N.A."/>
            <person name="Lu Y.-P."/>
            <person name="Flavell R.B."/>
            <person name="Feldmann K.A."/>
        </authorList>
    </citation>
    <scope>NUCLEOTIDE SEQUENCE [LARGE SCALE MRNA]</scope>
</reference>
<reference key="5">
    <citation type="journal article" date="2008" name="Biosci. Biotechnol. Biochem.">
        <title>The common function of a novel subfamily of B-Box zinc finger proteins with reference to circadian-associated events in Arabidopsis thaliana.</title>
        <authorList>
            <person name="Kumagai T."/>
            <person name="Ito S."/>
            <person name="Nakamichi N."/>
            <person name="Niwa Y."/>
            <person name="Murakami M."/>
            <person name="Yamashino T."/>
            <person name="Mizuno T."/>
        </authorList>
    </citation>
    <scope>FUNCTION</scope>
</reference>
<reference key="6">
    <citation type="journal article" date="2008" name="Plant Cell">
        <title>LZF1/SALT TOLERANCE HOMOLOG3, an Arabidopsis B-box protein involved in light-dependent development and gene expression, undergoes COP1-mediated ubiquitination.</title>
        <authorList>
            <person name="Datta S."/>
            <person name="Johansson H."/>
            <person name="Hettiarachchi C."/>
            <person name="Irigoyen M.L."/>
            <person name="Desai M."/>
            <person name="Rubio V."/>
            <person name="Holm M."/>
        </authorList>
    </citation>
    <scope>FUNCTION</scope>
    <scope>INTERACTION WITH HY5</scope>
    <scope>SUBCELLULAR LOCATION</scope>
    <scope>UBIQUITINATION BY COP1</scope>
    <scope>MUTAGENESIS OF ASP-20; ASP-72 AND ASP-81</scope>
    <scope>DISRUPTION PHENOTYPE</scope>
</reference>
<reference key="7">
    <citation type="journal article" date="2008" name="Plant J.">
        <title>LZF1, a HY5-regulated transcriptional factor, functions in Arabidopsis de-etiolation.</title>
        <authorList>
            <person name="Chang C.S."/>
            <person name="Li Y.H."/>
            <person name="Chen L.T."/>
            <person name="Chen W.C."/>
            <person name="Hsieh W.P."/>
            <person name="Shin J."/>
            <person name="Jane W.N."/>
            <person name="Chou S.J."/>
            <person name="Choi G."/>
            <person name="Hu J.M."/>
            <person name="Somerville S."/>
            <person name="Wu S.H."/>
        </authorList>
    </citation>
    <scope>FUNCTION</scope>
    <scope>INDUCTION BY LIGHT</scope>
    <scope>DISRUPTION PHENOTYPE</scope>
</reference>
<reference key="8">
    <citation type="journal article" date="2009" name="Plant Cell">
        <title>The Arabidopsis B-box zinc finger family.</title>
        <authorList>
            <person name="Khanna R."/>
            <person name="Kronmiller B."/>
            <person name="Maszle D.R."/>
            <person name="Coupland G."/>
            <person name="Holm M."/>
            <person name="Mizuno T."/>
            <person name="Wu S.H."/>
        </authorList>
    </citation>
    <scope>GENE FAMILY</scope>
    <scope>NOMENCLATURE</scope>
</reference>
<reference key="9">
    <citation type="journal article" date="2010" name="Plant J.">
        <title>AtBBX21 and COP1 genetically interact in the regulation of shade avoidance.</title>
        <authorList>
            <person name="Crocco C.D."/>
            <person name="Holm M."/>
            <person name="Yanovsky M.J."/>
            <person name="Botto J.F."/>
        </authorList>
    </citation>
    <scope>FUNCTION</scope>
</reference>
<reference key="10">
    <citation type="journal article" date="2011" name="Plant Physiol.">
        <title>COP1-mediated degradation of BBX22/LZF1 optimizes seedling development in Arabidopsis.</title>
        <authorList>
            <person name="Chang C.S."/>
            <person name="Maloof J.N."/>
            <person name="Wu S.H."/>
        </authorList>
    </citation>
    <scope>FUNCTION</scope>
    <scope>DEGRADATION BY THE PROTEASOME</scope>
</reference>
<sequence length="299" mass="32864">MKIQCNVCEAAEATVLCCADEAALCWACDEKIHAANKLAGKHQRVPLSASASSIPKCDICQEASGFFFCLQDRALLCRKCDVAIHTVNPHVSAHQRFLLTGIKVGLESIDTGPSTKSSPTNDDKTMETKPFVQSIPEPQKMAFDHHHHQQQQEQQEGVIPGTKVNDQTSTKLPLVSSGSTTGSIPQWQIEEIFGLTDFDQSYEYMENNGSSKADTSRRGDSDSSSMMRSAEEDGEDNNNCLGGETSWAVPQIQSPPTASGLNWPKHFHHHSVFVPDITSSTPYTGSSPNQRVGKRRRRF</sequence>
<keyword id="KW-0010">Activator</keyword>
<keyword id="KW-0025">Alternative splicing</keyword>
<keyword id="KW-0479">Metal-binding</keyword>
<keyword id="KW-0539">Nucleus</keyword>
<keyword id="KW-1185">Reference proteome</keyword>
<keyword id="KW-0677">Repeat</keyword>
<keyword id="KW-0804">Transcription</keyword>
<keyword id="KW-0805">Transcription regulation</keyword>
<keyword id="KW-0832">Ubl conjugation</keyword>
<keyword id="KW-0862">Zinc</keyword>
<keyword id="KW-0863">Zinc-finger</keyword>